<gene>
    <name evidence="1" type="primary">psmA</name>
    <name type="ordered locus">Mpal_2526</name>
</gene>
<evidence type="ECO:0000255" key="1">
    <source>
        <dbReference type="HAMAP-Rule" id="MF_00289"/>
    </source>
</evidence>
<dbReference type="EMBL" id="CP001338">
    <property type="protein sequence ID" value="ACL17799.1"/>
    <property type="molecule type" value="Genomic_DNA"/>
</dbReference>
<dbReference type="RefSeq" id="WP_012619118.1">
    <property type="nucleotide sequence ID" value="NC_011832.1"/>
</dbReference>
<dbReference type="SMR" id="B8GEZ3"/>
<dbReference type="STRING" id="521011.Mpal_2526"/>
<dbReference type="GeneID" id="7271695"/>
<dbReference type="KEGG" id="mpl:Mpal_2526"/>
<dbReference type="eggNOG" id="arCOG00971">
    <property type="taxonomic scope" value="Archaea"/>
</dbReference>
<dbReference type="HOGENOM" id="CLU_035750_4_1_2"/>
<dbReference type="OrthoDB" id="9421at2157"/>
<dbReference type="Proteomes" id="UP000002457">
    <property type="component" value="Chromosome"/>
</dbReference>
<dbReference type="GO" id="GO:0005737">
    <property type="term" value="C:cytoplasm"/>
    <property type="evidence" value="ECO:0007669"/>
    <property type="project" value="UniProtKB-SubCell"/>
</dbReference>
<dbReference type="GO" id="GO:0019773">
    <property type="term" value="C:proteasome core complex, alpha-subunit complex"/>
    <property type="evidence" value="ECO:0000250"/>
    <property type="project" value="UniProtKB"/>
</dbReference>
<dbReference type="GO" id="GO:0004298">
    <property type="term" value="F:threonine-type endopeptidase activity"/>
    <property type="evidence" value="ECO:0007669"/>
    <property type="project" value="InterPro"/>
</dbReference>
<dbReference type="GO" id="GO:0010498">
    <property type="term" value="P:proteasomal protein catabolic process"/>
    <property type="evidence" value="ECO:0007669"/>
    <property type="project" value="UniProtKB-UniRule"/>
</dbReference>
<dbReference type="GO" id="GO:0006511">
    <property type="term" value="P:ubiquitin-dependent protein catabolic process"/>
    <property type="evidence" value="ECO:0007669"/>
    <property type="project" value="InterPro"/>
</dbReference>
<dbReference type="CDD" id="cd03756">
    <property type="entry name" value="proteasome_alpha_archeal"/>
    <property type="match status" value="1"/>
</dbReference>
<dbReference type="FunFam" id="3.60.20.10:FF:000004">
    <property type="entry name" value="Proteasome subunit alpha type-4"/>
    <property type="match status" value="1"/>
</dbReference>
<dbReference type="Gene3D" id="3.60.20.10">
    <property type="entry name" value="Glutamine Phosphoribosylpyrophosphate, subunit 1, domain 1"/>
    <property type="match status" value="1"/>
</dbReference>
<dbReference type="HAMAP" id="MF_00289_A">
    <property type="entry name" value="Proteasome_A_A"/>
    <property type="match status" value="1"/>
</dbReference>
<dbReference type="InterPro" id="IPR029055">
    <property type="entry name" value="Ntn_hydrolases_N"/>
</dbReference>
<dbReference type="InterPro" id="IPR050115">
    <property type="entry name" value="Proteasome_alpha"/>
</dbReference>
<dbReference type="InterPro" id="IPR023332">
    <property type="entry name" value="Proteasome_alpha-type"/>
</dbReference>
<dbReference type="InterPro" id="IPR019982">
    <property type="entry name" value="Proteasome_asu_arc"/>
</dbReference>
<dbReference type="InterPro" id="IPR000426">
    <property type="entry name" value="Proteasome_asu_N"/>
</dbReference>
<dbReference type="InterPro" id="IPR001353">
    <property type="entry name" value="Proteasome_sua/b"/>
</dbReference>
<dbReference type="NCBIfam" id="TIGR03633">
    <property type="entry name" value="arc_protsome_A"/>
    <property type="match status" value="1"/>
</dbReference>
<dbReference type="NCBIfam" id="NF003075">
    <property type="entry name" value="PRK03996.1"/>
    <property type="match status" value="1"/>
</dbReference>
<dbReference type="PANTHER" id="PTHR11599">
    <property type="entry name" value="PROTEASOME SUBUNIT ALPHA/BETA"/>
    <property type="match status" value="1"/>
</dbReference>
<dbReference type="Pfam" id="PF00227">
    <property type="entry name" value="Proteasome"/>
    <property type="match status" value="1"/>
</dbReference>
<dbReference type="Pfam" id="PF10584">
    <property type="entry name" value="Proteasome_A_N"/>
    <property type="match status" value="1"/>
</dbReference>
<dbReference type="SMART" id="SM00948">
    <property type="entry name" value="Proteasome_A_N"/>
    <property type="match status" value="1"/>
</dbReference>
<dbReference type="SUPFAM" id="SSF56235">
    <property type="entry name" value="N-terminal nucleophile aminohydrolases (Ntn hydrolases)"/>
    <property type="match status" value="1"/>
</dbReference>
<dbReference type="PROSITE" id="PS00388">
    <property type="entry name" value="PROTEASOME_ALPHA_1"/>
    <property type="match status" value="1"/>
</dbReference>
<dbReference type="PROSITE" id="PS51475">
    <property type="entry name" value="PROTEASOME_ALPHA_2"/>
    <property type="match status" value="1"/>
</dbReference>
<proteinExistence type="inferred from homology"/>
<sequence>MQPQYQMGYDRAITVFSPDGRLYQVEYAREAVKRGTTAVGIKCNDGIVLLVDKRVNSKLLEPSSIEKIFKIDNHIGVASSGLVGDARSLVDRARVESQVNRVSYDEQIDVEMLSKKLCDHMQTYTQFGGARPYGTALLIAGISDGQFRLFETDPSGTLLEYKATGIGIGRNAVMKVFEEEYNPEASIRDAILLGLKALHAATEGKFDVNTVEIGVVNNDTPAFRKMSRQEVASFVEQIEQS</sequence>
<name>PSA_METPE</name>
<accession>B8GEZ3</accession>
<protein>
    <recommendedName>
        <fullName evidence="1">Proteasome subunit alpha</fullName>
    </recommendedName>
    <alternativeName>
        <fullName evidence="1">20S proteasome alpha subunit</fullName>
    </alternativeName>
    <alternativeName>
        <fullName evidence="1">Proteasome core protein PsmA</fullName>
    </alternativeName>
</protein>
<comment type="function">
    <text evidence="1">Component of the proteasome core, a large protease complex with broad specificity involved in protein degradation.</text>
</comment>
<comment type="activity regulation">
    <text evidence="1">The formation of the proteasomal ATPase PAN-20S proteasome complex, via the docking of the C-termini of PAN into the intersubunit pockets in the alpha-rings, triggers opening of the gate for substrate entry. Interconversion between the open-gate and close-gate conformations leads to a dynamic regulation of the 20S proteasome proteolysis activity.</text>
</comment>
<comment type="subunit">
    <text evidence="1">The 20S proteasome core is composed of 14 alpha and 14 beta subunits that assemble into four stacked heptameric rings, resulting in a barrel-shaped structure. The two inner rings, each composed of seven catalytic beta subunits, are sandwiched by two outer rings, each composed of seven alpha subunits. The catalytic chamber with the active sites is on the inside of the barrel. Has a gated structure, the ends of the cylinder being occluded by the N-termini of the alpha-subunits. Is capped at one or both ends by the proteasome regulatory ATPase, PAN.</text>
</comment>
<comment type="subcellular location">
    <subcellularLocation>
        <location evidence="1">Cytoplasm</location>
    </subcellularLocation>
</comment>
<comment type="similarity">
    <text evidence="1">Belongs to the peptidase T1A family.</text>
</comment>
<keyword id="KW-0963">Cytoplasm</keyword>
<keyword id="KW-0647">Proteasome</keyword>
<keyword id="KW-1185">Reference proteome</keyword>
<reference key="1">
    <citation type="journal article" date="2015" name="Genome Announc.">
        <title>Complete Genome Sequence of Methanosphaerula palustris E1-9CT, a Hydrogenotrophic Methanogen Isolated from a Minerotrophic Fen Peatland.</title>
        <authorList>
            <person name="Cadillo-Quiroz H."/>
            <person name="Browne P."/>
            <person name="Kyrpides N."/>
            <person name="Woyke T."/>
            <person name="Goodwin L."/>
            <person name="Detter C."/>
            <person name="Yavitt J.B."/>
            <person name="Zinder S.H."/>
        </authorList>
    </citation>
    <scope>NUCLEOTIDE SEQUENCE [LARGE SCALE GENOMIC DNA]</scope>
    <source>
        <strain>ATCC BAA-1556 / DSM 19958 / E1-9c</strain>
    </source>
</reference>
<feature type="chain" id="PRO_1000192661" description="Proteasome subunit alpha">
    <location>
        <begin position="1"/>
        <end position="241"/>
    </location>
</feature>
<organism>
    <name type="scientific">Methanosphaerula palustris (strain ATCC BAA-1556 / DSM 19958 / E1-9c)</name>
    <dbReference type="NCBI Taxonomy" id="521011"/>
    <lineage>
        <taxon>Archaea</taxon>
        <taxon>Methanobacteriati</taxon>
        <taxon>Methanobacteriota</taxon>
        <taxon>Stenosarchaea group</taxon>
        <taxon>Methanomicrobia</taxon>
        <taxon>Methanomicrobiales</taxon>
        <taxon>Methanoregulaceae</taxon>
        <taxon>Methanosphaerula</taxon>
    </lineage>
</organism>